<protein>
    <recommendedName>
        <fullName evidence="2">Small ribosomal subunit protein uS12</fullName>
    </recommendedName>
    <alternativeName>
        <fullName evidence="3">30S ribosomal protein S12</fullName>
    </alternativeName>
</protein>
<sequence>MATVNQLVRKPRARKVAKSNVPALEACPQKRGVCTRVYTTTPKKPNSALRKVCRVRLTNGFEVTSYIGGEGHNLQEHSVILIRGGRVKDLPGVRYHTVRGALDCSGVKDRKQARSKYGVKRPKA</sequence>
<gene>
    <name evidence="2" type="primary">rpsL</name>
    <name type="ordered locus">EcolC_0371</name>
</gene>
<organism>
    <name type="scientific">Escherichia coli (strain ATCC 8739 / DSM 1576 / NBRC 3972 / NCIMB 8545 / WDCM 00012 / Crooks)</name>
    <dbReference type="NCBI Taxonomy" id="481805"/>
    <lineage>
        <taxon>Bacteria</taxon>
        <taxon>Pseudomonadati</taxon>
        <taxon>Pseudomonadota</taxon>
        <taxon>Gammaproteobacteria</taxon>
        <taxon>Enterobacterales</taxon>
        <taxon>Enterobacteriaceae</taxon>
        <taxon>Escherichia</taxon>
    </lineage>
</organism>
<dbReference type="EMBL" id="CP000946">
    <property type="protein sequence ID" value="ACA76049.1"/>
    <property type="molecule type" value="Genomic_DNA"/>
</dbReference>
<dbReference type="RefSeq" id="WP_000246815.1">
    <property type="nucleotide sequence ID" value="NZ_MTFT01000001.1"/>
</dbReference>
<dbReference type="SMR" id="B1IPV7"/>
<dbReference type="GeneID" id="98390450"/>
<dbReference type="KEGG" id="ecl:EcolC_0371"/>
<dbReference type="HOGENOM" id="CLU_104295_1_2_6"/>
<dbReference type="GO" id="GO:0015935">
    <property type="term" value="C:small ribosomal subunit"/>
    <property type="evidence" value="ECO:0007669"/>
    <property type="project" value="InterPro"/>
</dbReference>
<dbReference type="GO" id="GO:0019843">
    <property type="term" value="F:rRNA binding"/>
    <property type="evidence" value="ECO:0007669"/>
    <property type="project" value="UniProtKB-UniRule"/>
</dbReference>
<dbReference type="GO" id="GO:0003735">
    <property type="term" value="F:structural constituent of ribosome"/>
    <property type="evidence" value="ECO:0007669"/>
    <property type="project" value="InterPro"/>
</dbReference>
<dbReference type="GO" id="GO:0000049">
    <property type="term" value="F:tRNA binding"/>
    <property type="evidence" value="ECO:0007669"/>
    <property type="project" value="UniProtKB-UniRule"/>
</dbReference>
<dbReference type="GO" id="GO:0006412">
    <property type="term" value="P:translation"/>
    <property type="evidence" value="ECO:0007669"/>
    <property type="project" value="UniProtKB-UniRule"/>
</dbReference>
<dbReference type="CDD" id="cd03368">
    <property type="entry name" value="Ribosomal_S12"/>
    <property type="match status" value="1"/>
</dbReference>
<dbReference type="FunFam" id="2.40.50.140:FF:000001">
    <property type="entry name" value="30S ribosomal protein S12"/>
    <property type="match status" value="1"/>
</dbReference>
<dbReference type="Gene3D" id="2.40.50.140">
    <property type="entry name" value="Nucleic acid-binding proteins"/>
    <property type="match status" value="1"/>
</dbReference>
<dbReference type="HAMAP" id="MF_00403_B">
    <property type="entry name" value="Ribosomal_uS12_B"/>
    <property type="match status" value="1"/>
</dbReference>
<dbReference type="InterPro" id="IPR012340">
    <property type="entry name" value="NA-bd_OB-fold"/>
</dbReference>
<dbReference type="InterPro" id="IPR006032">
    <property type="entry name" value="Ribosomal_uS12"/>
</dbReference>
<dbReference type="InterPro" id="IPR005679">
    <property type="entry name" value="Ribosomal_uS12_bac"/>
</dbReference>
<dbReference type="NCBIfam" id="TIGR00981">
    <property type="entry name" value="rpsL_bact"/>
    <property type="match status" value="1"/>
</dbReference>
<dbReference type="PANTHER" id="PTHR11652">
    <property type="entry name" value="30S RIBOSOMAL PROTEIN S12 FAMILY MEMBER"/>
    <property type="match status" value="1"/>
</dbReference>
<dbReference type="Pfam" id="PF00164">
    <property type="entry name" value="Ribosom_S12_S23"/>
    <property type="match status" value="1"/>
</dbReference>
<dbReference type="PIRSF" id="PIRSF002133">
    <property type="entry name" value="Ribosomal_S12/S23"/>
    <property type="match status" value="1"/>
</dbReference>
<dbReference type="PRINTS" id="PR01034">
    <property type="entry name" value="RIBOSOMALS12"/>
</dbReference>
<dbReference type="SUPFAM" id="SSF50249">
    <property type="entry name" value="Nucleic acid-binding proteins"/>
    <property type="match status" value="1"/>
</dbReference>
<dbReference type="PROSITE" id="PS00055">
    <property type="entry name" value="RIBOSOMAL_S12"/>
    <property type="match status" value="1"/>
</dbReference>
<accession>B1IPV7</accession>
<reference key="1">
    <citation type="submission" date="2008-02" db="EMBL/GenBank/DDBJ databases">
        <title>Complete sequence of Escherichia coli C str. ATCC 8739.</title>
        <authorList>
            <person name="Copeland A."/>
            <person name="Lucas S."/>
            <person name="Lapidus A."/>
            <person name="Glavina del Rio T."/>
            <person name="Dalin E."/>
            <person name="Tice H."/>
            <person name="Bruce D."/>
            <person name="Goodwin L."/>
            <person name="Pitluck S."/>
            <person name="Kiss H."/>
            <person name="Brettin T."/>
            <person name="Detter J.C."/>
            <person name="Han C."/>
            <person name="Kuske C.R."/>
            <person name="Schmutz J."/>
            <person name="Larimer F."/>
            <person name="Land M."/>
            <person name="Hauser L."/>
            <person name="Kyrpides N."/>
            <person name="Mikhailova N."/>
            <person name="Ingram L."/>
            <person name="Richardson P."/>
        </authorList>
    </citation>
    <scope>NUCLEOTIDE SEQUENCE [LARGE SCALE GENOMIC DNA]</scope>
    <source>
        <strain>ATCC 8739 / DSM 1576 / NBRC 3972 / NCIMB 8545 / WDCM 00012 / Crooks</strain>
    </source>
</reference>
<proteinExistence type="inferred from homology"/>
<feature type="chain" id="PRO_1000080394" description="Small ribosomal subunit protein uS12">
    <location>
        <begin position="1"/>
        <end position="124"/>
    </location>
</feature>
<feature type="modified residue" description="3-methylthioaspartic acid" evidence="1">
    <location>
        <position position="89"/>
    </location>
</feature>
<feature type="modified residue" description="N6-acetyllysine" evidence="2">
    <location>
        <position position="108"/>
    </location>
</feature>
<evidence type="ECO:0000250" key="1"/>
<evidence type="ECO:0000255" key="2">
    <source>
        <dbReference type="HAMAP-Rule" id="MF_00403"/>
    </source>
</evidence>
<evidence type="ECO:0000305" key="3"/>
<name>RS12_ECOLC</name>
<comment type="function">
    <text evidence="2">With S4 and S5 plays an important role in translational accuracy.</text>
</comment>
<comment type="function">
    <text evidence="2">Interacts with and stabilizes bases of the 16S rRNA that are involved in tRNA selection in the A site and with the mRNA backbone. Located at the interface of the 30S and 50S subunits, it traverses the body of the 30S subunit contacting proteins on the other side and probably holding the rRNA structure together. The combined cluster of proteins S8, S12 and S17 appears to hold together the shoulder and platform of the 30S subunit.</text>
</comment>
<comment type="subunit">
    <text evidence="2">Part of the 30S ribosomal subunit. Contacts proteins S8 and S17. May interact with IF1 in the 30S initiation complex.</text>
</comment>
<comment type="similarity">
    <text evidence="2">Belongs to the universal ribosomal protein uS12 family.</text>
</comment>
<keyword id="KW-0007">Acetylation</keyword>
<keyword id="KW-0488">Methylation</keyword>
<keyword id="KW-0687">Ribonucleoprotein</keyword>
<keyword id="KW-0689">Ribosomal protein</keyword>
<keyword id="KW-0694">RNA-binding</keyword>
<keyword id="KW-0699">rRNA-binding</keyword>
<keyword id="KW-0820">tRNA-binding</keyword>